<name>DIA2_EREGS</name>
<feature type="chain" id="PRO_0000233002" description="Protein DIA2">
    <location>
        <begin position="1"/>
        <end position="685"/>
    </location>
</feature>
<feature type="repeat" description="TPR 1">
    <location>
        <begin position="6"/>
        <end position="39"/>
    </location>
</feature>
<feature type="repeat" description="TPR 2">
    <location>
        <begin position="70"/>
        <end position="103"/>
    </location>
</feature>
<feature type="repeat" description="TPR 3">
    <location>
        <begin position="104"/>
        <end position="137"/>
    </location>
</feature>
<feature type="domain" description="F-box" evidence="2">
    <location>
        <begin position="207"/>
        <end position="254"/>
    </location>
</feature>
<feature type="repeat" description="LRR 1">
    <location>
        <begin position="300"/>
        <end position="323"/>
    </location>
</feature>
<feature type="repeat" description="LRR 2">
    <location>
        <begin position="353"/>
        <end position="377"/>
    </location>
</feature>
<feature type="repeat" description="LRR 3">
    <location>
        <begin position="454"/>
        <end position="480"/>
    </location>
</feature>
<feature type="repeat" description="LRR 4">
    <location>
        <begin position="499"/>
        <end position="517"/>
    </location>
</feature>
<feature type="repeat" description="LRR 5">
    <location>
        <begin position="518"/>
        <end position="542"/>
    </location>
</feature>
<feature type="repeat" description="LRR 6">
    <location>
        <begin position="562"/>
        <end position="585"/>
    </location>
</feature>
<feature type="repeat" description="LRR 7">
    <location>
        <begin position="598"/>
        <end position="622"/>
    </location>
</feature>
<keyword id="KW-0131">Cell cycle</keyword>
<keyword id="KW-0433">Leucine-rich repeat</keyword>
<keyword id="KW-0539">Nucleus</keyword>
<keyword id="KW-1185">Reference proteome</keyword>
<keyword id="KW-0677">Repeat</keyword>
<keyword id="KW-0802">TPR repeat</keyword>
<keyword id="KW-0833">Ubl conjugation pathway</keyword>
<protein>
    <recommendedName>
        <fullName>Protein DIA2</fullName>
    </recommendedName>
</protein>
<sequence>MSEDIIDRSLELGIQCFQGEDYKGAAELFSKSLQLARSYTDRSLEGIREKVGLPKRCLHDPSRVYHPRYLVLLDNRAATWEKLNKLDRALADAAYMITVDAYNLKGYIRRGKVLQKLGRYEEALQVYENGLKQAGEAEKTHAIHAPQKFLDIVYRQRSTIKELLQSRARSSRSLTQQTVAKEPKLKRPATIDSLMPGKKRSSSKAKIDYIATLPVEIIERIMANMDTRSIIRCYSVCKLWKYRLERLPHLYQEFRLSCCYKNMLGYVNFVGALASRTAEYSCRSIQCVSGNVQEEEKSIILLLSRLMIGTRQLALMAKKCKAERIIQHICENKKLRNGVQRLSITAPVHFGHKLNLHELYTRTTSMTHLELVLNFHTPSEHVGGHLFPWQDHAVAETNLESFTLMARNYSVHHVNVIEQFEYSSVLFKRLKKLCITGIDFRLGDRNNLKWISDMPNLQELWLERNTGIEFHELITQIVQVGAPKTLRHLTFREPPNRHFDRMDQSQLGLGEEALREVFQSLESLDLMNTRFDPQLLLLLLQPACENRIARLNIGNCPRLSFARDLEILTLIFQQLPALTDLLLPNVMEYTRQGMEVLRKNIKGMKLKRLDLSFIPSLKGYELLDLLKELKGINPLGLETLTINGCTAVAPQTVDYITRNGYAQKVMCAYERTQWEHLGINSFWYR</sequence>
<dbReference type="EMBL" id="AE016817">
    <property type="protein sequence ID" value="AAS52150.2"/>
    <property type="molecule type" value="Genomic_DNA"/>
</dbReference>
<dbReference type="RefSeq" id="NP_984326.2">
    <property type="nucleotide sequence ID" value="NM_209679.2"/>
</dbReference>
<dbReference type="SMR" id="Q75A03"/>
<dbReference type="FunCoup" id="Q75A03">
    <property type="interactions" value="122"/>
</dbReference>
<dbReference type="STRING" id="284811.Q75A03"/>
<dbReference type="EnsemblFungi" id="AAS52150">
    <property type="protein sequence ID" value="AAS52150"/>
    <property type="gene ID" value="AGOS_ADR230W"/>
</dbReference>
<dbReference type="GeneID" id="4620488"/>
<dbReference type="KEGG" id="ago:AGOS_ADR230W"/>
<dbReference type="eggNOG" id="ENOG502QRSD">
    <property type="taxonomic scope" value="Eukaryota"/>
</dbReference>
<dbReference type="HOGENOM" id="CLU_023422_0_0_1"/>
<dbReference type="InParanoid" id="Q75A03"/>
<dbReference type="OMA" id="ISCKGYL"/>
<dbReference type="OrthoDB" id="629492at2759"/>
<dbReference type="Proteomes" id="UP000000591">
    <property type="component" value="Chromosome IV"/>
</dbReference>
<dbReference type="GO" id="GO:0005634">
    <property type="term" value="C:nucleus"/>
    <property type="evidence" value="ECO:0007669"/>
    <property type="project" value="UniProtKB-SubCell"/>
</dbReference>
<dbReference type="GO" id="GO:0051879">
    <property type="term" value="F:Hsp90 protein binding"/>
    <property type="evidence" value="ECO:0000318"/>
    <property type="project" value="GO_Central"/>
</dbReference>
<dbReference type="CDD" id="cd09917">
    <property type="entry name" value="F-box_SF"/>
    <property type="match status" value="1"/>
</dbReference>
<dbReference type="Gene3D" id="1.20.1280.50">
    <property type="match status" value="1"/>
</dbReference>
<dbReference type="Gene3D" id="3.80.10.10">
    <property type="entry name" value="Ribonuclease Inhibitor"/>
    <property type="match status" value="1"/>
</dbReference>
<dbReference type="Gene3D" id="1.25.40.10">
    <property type="entry name" value="Tetratricopeptide repeat domain"/>
    <property type="match status" value="1"/>
</dbReference>
<dbReference type="InterPro" id="IPR036047">
    <property type="entry name" value="F-box-like_dom_sf"/>
</dbReference>
<dbReference type="InterPro" id="IPR001810">
    <property type="entry name" value="F-box_dom"/>
</dbReference>
<dbReference type="InterPro" id="IPR032675">
    <property type="entry name" value="LRR_dom_sf"/>
</dbReference>
<dbReference type="InterPro" id="IPR011990">
    <property type="entry name" value="TPR-like_helical_dom_sf"/>
</dbReference>
<dbReference type="InterPro" id="IPR019734">
    <property type="entry name" value="TPR_rpt"/>
</dbReference>
<dbReference type="PANTHER" id="PTHR22904:SF523">
    <property type="entry name" value="STRESS-INDUCED-PHOSPHOPROTEIN 1"/>
    <property type="match status" value="1"/>
</dbReference>
<dbReference type="PANTHER" id="PTHR22904">
    <property type="entry name" value="TPR REPEAT CONTAINING PROTEIN"/>
    <property type="match status" value="1"/>
</dbReference>
<dbReference type="Pfam" id="PF12937">
    <property type="entry name" value="F-box-like"/>
    <property type="match status" value="1"/>
</dbReference>
<dbReference type="SMART" id="SM00028">
    <property type="entry name" value="TPR"/>
    <property type="match status" value="2"/>
</dbReference>
<dbReference type="SUPFAM" id="SSF81383">
    <property type="entry name" value="F-box domain"/>
    <property type="match status" value="1"/>
</dbReference>
<dbReference type="SUPFAM" id="SSF52047">
    <property type="entry name" value="RNI-like"/>
    <property type="match status" value="1"/>
</dbReference>
<dbReference type="SUPFAM" id="SSF48452">
    <property type="entry name" value="TPR-like"/>
    <property type="match status" value="1"/>
</dbReference>
<dbReference type="PROSITE" id="PS50181">
    <property type="entry name" value="FBOX"/>
    <property type="match status" value="1"/>
</dbReference>
<dbReference type="PROSITE" id="PS50005">
    <property type="entry name" value="TPR"/>
    <property type="match status" value="2"/>
</dbReference>
<dbReference type="PROSITE" id="PS50293">
    <property type="entry name" value="TPR_REGION"/>
    <property type="match status" value="1"/>
</dbReference>
<organism>
    <name type="scientific">Eremothecium gossypii (strain ATCC 10895 / CBS 109.51 / FGSC 9923 / NRRL Y-1056)</name>
    <name type="common">Yeast</name>
    <name type="synonym">Ashbya gossypii</name>
    <dbReference type="NCBI Taxonomy" id="284811"/>
    <lineage>
        <taxon>Eukaryota</taxon>
        <taxon>Fungi</taxon>
        <taxon>Dikarya</taxon>
        <taxon>Ascomycota</taxon>
        <taxon>Saccharomycotina</taxon>
        <taxon>Saccharomycetes</taxon>
        <taxon>Saccharomycetales</taxon>
        <taxon>Saccharomycetaceae</taxon>
        <taxon>Eremothecium</taxon>
    </lineage>
</organism>
<gene>
    <name type="primary">DIA2</name>
    <name type="ordered locus">ADR230W</name>
</gene>
<accession>Q75A03</accession>
<comment type="function">
    <text evidence="1">F-box protein component of a SCF ubiquitin ligase complex involved in ubiquitin-dependent protein degradation. The SCF-DIA2 complex is specifically involved in the pheromone induced degradation of phosphorylated TEC1. Involved in DNA replication, genome stability, and the control of cell cycle, probably through its association to replication origins to facilitate the ubiquitination of another origin-binding protein (By similarity).</text>
</comment>
<comment type="subunit">
    <text evidence="1">Forms a SCF ubiquitin ligase complex which binds to DNA replication origins.</text>
</comment>
<comment type="subcellular location">
    <subcellularLocation>
        <location evidence="3">Nucleus</location>
    </subcellularLocation>
</comment>
<comment type="similarity">
    <text evidence="3">Belongs to the DIA2 family.</text>
</comment>
<proteinExistence type="inferred from homology"/>
<reference key="1">
    <citation type="journal article" date="2004" name="Science">
        <title>The Ashbya gossypii genome as a tool for mapping the ancient Saccharomyces cerevisiae genome.</title>
        <authorList>
            <person name="Dietrich F.S."/>
            <person name="Voegeli S."/>
            <person name="Brachat S."/>
            <person name="Lerch A."/>
            <person name="Gates K."/>
            <person name="Steiner S."/>
            <person name="Mohr C."/>
            <person name="Poehlmann R."/>
            <person name="Luedi P."/>
            <person name="Choi S."/>
            <person name="Wing R.A."/>
            <person name="Flavier A."/>
            <person name="Gaffney T.D."/>
            <person name="Philippsen P."/>
        </authorList>
    </citation>
    <scope>NUCLEOTIDE SEQUENCE [LARGE SCALE GENOMIC DNA]</scope>
    <source>
        <strain>ATCC 10895 / CBS 109.51 / FGSC 9923 / NRRL Y-1056</strain>
    </source>
</reference>
<reference key="2">
    <citation type="journal article" date="2013" name="G3 (Bethesda)">
        <title>Genomes of Ashbya fungi isolated from insects reveal four mating-type loci, numerous translocations, lack of transposons, and distinct gene duplications.</title>
        <authorList>
            <person name="Dietrich F.S."/>
            <person name="Voegeli S."/>
            <person name="Kuo S."/>
            <person name="Philippsen P."/>
        </authorList>
    </citation>
    <scope>GENOME REANNOTATION</scope>
    <scope>SEQUENCE REVISION TO 69-70 AND 80</scope>
    <source>
        <strain>ATCC 10895 / CBS 109.51 / FGSC 9923 / NRRL Y-1056</strain>
    </source>
</reference>
<evidence type="ECO:0000250" key="1"/>
<evidence type="ECO:0000255" key="2">
    <source>
        <dbReference type="PROSITE-ProRule" id="PRU00080"/>
    </source>
</evidence>
<evidence type="ECO:0000305" key="3"/>